<accession>Q94C11</accession>
<accession>Q9SUZ3</accession>
<name>SUGP1_ARATH</name>
<proteinExistence type="evidence at protein level"/>
<organism>
    <name type="scientific">Arabidopsis thaliana</name>
    <name type="common">Mouse-ear cress</name>
    <dbReference type="NCBI Taxonomy" id="3702"/>
    <lineage>
        <taxon>Eukaryota</taxon>
        <taxon>Viridiplantae</taxon>
        <taxon>Streptophyta</taxon>
        <taxon>Embryophyta</taxon>
        <taxon>Tracheophyta</taxon>
        <taxon>Spermatophyta</taxon>
        <taxon>Magnoliopsida</taxon>
        <taxon>eudicotyledons</taxon>
        <taxon>Gunneridae</taxon>
        <taxon>Pentapetalae</taxon>
        <taxon>rosids</taxon>
        <taxon>malvids</taxon>
        <taxon>Brassicales</taxon>
        <taxon>Brassicaceae</taxon>
        <taxon>Camelineae</taxon>
        <taxon>Arabidopsis</taxon>
    </lineage>
</organism>
<sequence length="443" mass="48693">MDKGAPPSIFVNDGSFMERFRQLQQEKDKDKDKVVQVEDSKPVKIISNPKPAANKISIGLKPNDAQKKGGKLAFSLKQKSKLLAPPVKLGTEEDEDDEDVKHEQGFGSVKRQKLEQRDTPVKSAKVSDVAPPPPSDPTVKKVADKLASFVAKHGRPFEHITRQKNPGDTPFKFLFDENCADYKYYVFRLAEEEKLISQTKDSGVLHSGDAGSRTSTAAIPLQKPAYQQTGYQIPASALYDTPVEPGASSRSAQASITRPSDSDSFSGPRGADPLSMMEFYMKKAAQEEKMRRPRQSKDEMPPPASLQGPSETSSTDPGKRGHHMGDYIPLEELDKFLSKCNDAAAQKATKEAAEKAKIQADNVGHKLLSKMGWKEGEGIGSSRKGMADPIMAGDVKTNNLGVGASAPGEVKPEDDIYEQYKKRMMLGYKHRPNPLGNPRKAYY</sequence>
<feature type="chain" id="PRO_0000097704" description="SURP and G-patch domain-containing protein 1-like protein">
    <location>
        <begin position="1"/>
        <end position="443"/>
    </location>
</feature>
<feature type="repeat" description="SURP motif">
    <location>
        <begin position="142"/>
        <end position="185"/>
    </location>
</feature>
<feature type="domain" description="G-patch" evidence="1">
    <location>
        <begin position="360"/>
        <end position="407"/>
    </location>
</feature>
<feature type="region of interest" description="Disordered" evidence="2">
    <location>
        <begin position="45"/>
        <end position="71"/>
    </location>
</feature>
<feature type="region of interest" description="Disordered" evidence="2">
    <location>
        <begin position="83"/>
        <end position="141"/>
    </location>
</feature>
<feature type="region of interest" description="Disordered" evidence="2">
    <location>
        <begin position="198"/>
        <end position="221"/>
    </location>
</feature>
<feature type="region of interest" description="Disordered" evidence="2">
    <location>
        <begin position="241"/>
        <end position="272"/>
    </location>
</feature>
<feature type="region of interest" description="Disordered" evidence="2">
    <location>
        <begin position="285"/>
        <end position="325"/>
    </location>
</feature>
<feature type="compositionally biased region" description="Polar residues" evidence="2">
    <location>
        <begin position="248"/>
        <end position="265"/>
    </location>
</feature>
<feature type="compositionally biased region" description="Basic and acidic residues" evidence="2">
    <location>
        <begin position="285"/>
        <end position="300"/>
    </location>
</feature>
<feature type="compositionally biased region" description="Polar residues" evidence="2">
    <location>
        <begin position="307"/>
        <end position="316"/>
    </location>
</feature>
<keyword id="KW-0025">Alternative splicing</keyword>
<keyword id="KW-0507">mRNA processing</keyword>
<keyword id="KW-0508">mRNA splicing</keyword>
<keyword id="KW-0539">Nucleus</keyword>
<keyword id="KW-1185">Reference proteome</keyword>
<evidence type="ECO:0000255" key="1">
    <source>
        <dbReference type="PROSITE-ProRule" id="PRU00092"/>
    </source>
</evidence>
<evidence type="ECO:0000256" key="2">
    <source>
        <dbReference type="SAM" id="MobiDB-lite"/>
    </source>
</evidence>
<evidence type="ECO:0000305" key="3"/>
<reference key="1">
    <citation type="journal article" date="2000" name="Nature">
        <title>Sequence and analysis of chromosome 3 of the plant Arabidopsis thaliana.</title>
        <authorList>
            <person name="Salanoubat M."/>
            <person name="Lemcke K."/>
            <person name="Rieger M."/>
            <person name="Ansorge W."/>
            <person name="Unseld M."/>
            <person name="Fartmann B."/>
            <person name="Valle G."/>
            <person name="Bloecker H."/>
            <person name="Perez-Alonso M."/>
            <person name="Obermaier B."/>
            <person name="Delseny M."/>
            <person name="Boutry M."/>
            <person name="Grivell L.A."/>
            <person name="Mache R."/>
            <person name="Puigdomenech P."/>
            <person name="De Simone V."/>
            <person name="Choisne N."/>
            <person name="Artiguenave F."/>
            <person name="Robert C."/>
            <person name="Brottier P."/>
            <person name="Wincker P."/>
            <person name="Cattolico L."/>
            <person name="Weissenbach J."/>
            <person name="Saurin W."/>
            <person name="Quetier F."/>
            <person name="Schaefer M."/>
            <person name="Mueller-Auer S."/>
            <person name="Gabel C."/>
            <person name="Fuchs M."/>
            <person name="Benes V."/>
            <person name="Wurmbach E."/>
            <person name="Drzonek H."/>
            <person name="Erfle H."/>
            <person name="Jordan N."/>
            <person name="Bangert S."/>
            <person name="Wiedelmann R."/>
            <person name="Kranz H."/>
            <person name="Voss H."/>
            <person name="Holland R."/>
            <person name="Brandt P."/>
            <person name="Nyakatura G."/>
            <person name="Vezzi A."/>
            <person name="D'Angelo M."/>
            <person name="Pallavicini A."/>
            <person name="Toppo S."/>
            <person name="Simionati B."/>
            <person name="Conrad A."/>
            <person name="Hornischer K."/>
            <person name="Kauer G."/>
            <person name="Loehnert T.-H."/>
            <person name="Nordsiek G."/>
            <person name="Reichelt J."/>
            <person name="Scharfe M."/>
            <person name="Schoen O."/>
            <person name="Bargues M."/>
            <person name="Terol J."/>
            <person name="Climent J."/>
            <person name="Navarro P."/>
            <person name="Collado C."/>
            <person name="Perez-Perez A."/>
            <person name="Ottenwaelder B."/>
            <person name="Duchemin D."/>
            <person name="Cooke R."/>
            <person name="Laudie M."/>
            <person name="Berger-Llauro C."/>
            <person name="Purnelle B."/>
            <person name="Masuy D."/>
            <person name="de Haan M."/>
            <person name="Maarse A.C."/>
            <person name="Alcaraz J.-P."/>
            <person name="Cottet A."/>
            <person name="Casacuberta E."/>
            <person name="Monfort A."/>
            <person name="Argiriou A."/>
            <person name="Flores M."/>
            <person name="Liguori R."/>
            <person name="Vitale D."/>
            <person name="Mannhaupt G."/>
            <person name="Haase D."/>
            <person name="Schoof H."/>
            <person name="Rudd S."/>
            <person name="Zaccaria P."/>
            <person name="Mewes H.-W."/>
            <person name="Mayer K.F.X."/>
            <person name="Kaul S."/>
            <person name="Town C.D."/>
            <person name="Koo H.L."/>
            <person name="Tallon L.J."/>
            <person name="Jenkins J."/>
            <person name="Rooney T."/>
            <person name="Rizzo M."/>
            <person name="Walts A."/>
            <person name="Utterback T."/>
            <person name="Fujii C.Y."/>
            <person name="Shea T.P."/>
            <person name="Creasy T.H."/>
            <person name="Haas B."/>
            <person name="Maiti R."/>
            <person name="Wu D."/>
            <person name="Peterson J."/>
            <person name="Van Aken S."/>
            <person name="Pai G."/>
            <person name="Militscher J."/>
            <person name="Sellers P."/>
            <person name="Gill J.E."/>
            <person name="Feldblyum T.V."/>
            <person name="Preuss D."/>
            <person name="Lin X."/>
            <person name="Nierman W.C."/>
            <person name="Salzberg S.L."/>
            <person name="White O."/>
            <person name="Venter J.C."/>
            <person name="Fraser C.M."/>
            <person name="Kaneko T."/>
            <person name="Nakamura Y."/>
            <person name="Sato S."/>
            <person name="Kato T."/>
            <person name="Asamizu E."/>
            <person name="Sasamoto S."/>
            <person name="Kimura T."/>
            <person name="Idesawa K."/>
            <person name="Kawashima K."/>
            <person name="Kishida Y."/>
            <person name="Kiyokawa C."/>
            <person name="Kohara M."/>
            <person name="Matsumoto M."/>
            <person name="Matsuno A."/>
            <person name="Muraki A."/>
            <person name="Nakayama S."/>
            <person name="Nakazaki N."/>
            <person name="Shinpo S."/>
            <person name="Takeuchi C."/>
            <person name="Wada T."/>
            <person name="Watanabe A."/>
            <person name="Yamada M."/>
            <person name="Yasuda M."/>
            <person name="Tabata S."/>
        </authorList>
    </citation>
    <scope>NUCLEOTIDE SEQUENCE [LARGE SCALE GENOMIC DNA]</scope>
    <source>
        <strain>cv. Columbia</strain>
    </source>
</reference>
<reference key="2">
    <citation type="journal article" date="2017" name="Plant J.">
        <title>Araport11: a complete reannotation of the Arabidopsis thaliana reference genome.</title>
        <authorList>
            <person name="Cheng C.Y."/>
            <person name="Krishnakumar V."/>
            <person name="Chan A.P."/>
            <person name="Thibaud-Nissen F."/>
            <person name="Schobel S."/>
            <person name="Town C.D."/>
        </authorList>
    </citation>
    <scope>GENOME REANNOTATION</scope>
    <source>
        <strain>cv. Columbia</strain>
    </source>
</reference>
<reference key="3">
    <citation type="journal article" date="2003" name="Science">
        <title>Empirical analysis of transcriptional activity in the Arabidopsis genome.</title>
        <authorList>
            <person name="Yamada K."/>
            <person name="Lim J."/>
            <person name="Dale J.M."/>
            <person name="Chen H."/>
            <person name="Shinn P."/>
            <person name="Palm C.J."/>
            <person name="Southwick A.M."/>
            <person name="Wu H.C."/>
            <person name="Kim C.J."/>
            <person name="Nguyen M."/>
            <person name="Pham P.K."/>
            <person name="Cheuk R.F."/>
            <person name="Karlin-Newmann G."/>
            <person name="Liu S.X."/>
            <person name="Lam B."/>
            <person name="Sakano H."/>
            <person name="Wu T."/>
            <person name="Yu G."/>
            <person name="Miranda M."/>
            <person name="Quach H.L."/>
            <person name="Tripp M."/>
            <person name="Chang C.H."/>
            <person name="Lee J.M."/>
            <person name="Toriumi M.J."/>
            <person name="Chan M.M."/>
            <person name="Tang C.C."/>
            <person name="Onodera C.S."/>
            <person name="Deng J.M."/>
            <person name="Akiyama K."/>
            <person name="Ansari Y."/>
            <person name="Arakawa T."/>
            <person name="Banh J."/>
            <person name="Banno F."/>
            <person name="Bowser L."/>
            <person name="Brooks S.Y."/>
            <person name="Carninci P."/>
            <person name="Chao Q."/>
            <person name="Choy N."/>
            <person name="Enju A."/>
            <person name="Goldsmith A.D."/>
            <person name="Gurjal M."/>
            <person name="Hansen N.F."/>
            <person name="Hayashizaki Y."/>
            <person name="Johnson-Hopson C."/>
            <person name="Hsuan V.W."/>
            <person name="Iida K."/>
            <person name="Karnes M."/>
            <person name="Khan S."/>
            <person name="Koesema E."/>
            <person name="Ishida J."/>
            <person name="Jiang P.X."/>
            <person name="Jones T."/>
            <person name="Kawai J."/>
            <person name="Kamiya A."/>
            <person name="Meyers C."/>
            <person name="Nakajima M."/>
            <person name="Narusaka M."/>
            <person name="Seki M."/>
            <person name="Sakurai T."/>
            <person name="Satou M."/>
            <person name="Tamse R."/>
            <person name="Vaysberg M."/>
            <person name="Wallender E.K."/>
            <person name="Wong C."/>
            <person name="Yamamura Y."/>
            <person name="Yuan S."/>
            <person name="Shinozaki K."/>
            <person name="Davis R.W."/>
            <person name="Theologis A."/>
            <person name="Ecker J.R."/>
        </authorList>
    </citation>
    <scope>NUCLEOTIDE SEQUENCE [LARGE SCALE MRNA]</scope>
    <source>
        <strain>cv. Columbia</strain>
    </source>
</reference>
<protein>
    <recommendedName>
        <fullName>SURP and G-patch domain-containing protein 1-like protein</fullName>
    </recommendedName>
    <alternativeName>
        <fullName>Splicing factor 4-like protein</fullName>
        <shortName>SF4-like protein</shortName>
    </alternativeName>
</protein>
<gene>
    <name type="ordered locus">At3g52120</name>
    <name type="ORF">F4F15.230</name>
</gene>
<comment type="interaction">
    <interactant intactId="EBI-25516347">
        <id>Q94C11</id>
    </interactant>
    <interactant intactId="EBI-25506855">
        <id>O23160</id>
        <label>MYB73</label>
    </interactant>
    <organismsDiffer>false</organismsDiffer>
    <experiments>3</experiments>
</comment>
<comment type="subcellular location">
    <subcellularLocation>
        <location evidence="3">Nucleus</location>
    </subcellularLocation>
</comment>
<comment type="alternative products">
    <event type="alternative splicing"/>
    <isoform>
        <id>Q94C11-1</id>
        <name>1</name>
        <sequence type="displayed"/>
    </isoform>
    <text>A number of isoforms are produced. According to EST sequences.</text>
</comment>
<comment type="sequence caution" evidence="3">
    <conflict type="erroneous gene model prediction">
        <sequence resource="EMBL-CDS" id="CAB41332"/>
    </conflict>
    <text>The predicted gene At3g52120 has been split into 2 genes: At3g52115 and At3g52120.</text>
</comment>
<dbReference type="EMBL" id="AL049711">
    <property type="protein sequence ID" value="CAB41332.1"/>
    <property type="status" value="ALT_SEQ"/>
    <property type="molecule type" value="Genomic_DNA"/>
</dbReference>
<dbReference type="EMBL" id="CP002686">
    <property type="protein sequence ID" value="AEE78896.1"/>
    <property type="molecule type" value="Genomic_DNA"/>
</dbReference>
<dbReference type="EMBL" id="AY037259">
    <property type="protein sequence ID" value="AAK59860.1"/>
    <property type="molecule type" value="mRNA"/>
</dbReference>
<dbReference type="EMBL" id="AY094004">
    <property type="protein sequence ID" value="AAM16265.1"/>
    <property type="molecule type" value="mRNA"/>
</dbReference>
<dbReference type="PIR" id="T49091">
    <property type="entry name" value="T49091"/>
</dbReference>
<dbReference type="RefSeq" id="NP_566957.1">
    <molecule id="Q94C11-1"/>
    <property type="nucleotide sequence ID" value="NM_115071.4"/>
</dbReference>
<dbReference type="SMR" id="Q94C11"/>
<dbReference type="BioGRID" id="9694">
    <property type="interactions" value="2"/>
</dbReference>
<dbReference type="FunCoup" id="Q94C11">
    <property type="interactions" value="3533"/>
</dbReference>
<dbReference type="IntAct" id="Q94C11">
    <property type="interactions" value="1"/>
</dbReference>
<dbReference type="STRING" id="3702.Q94C11"/>
<dbReference type="PaxDb" id="3702-AT3G52120.1"/>
<dbReference type="ProteomicsDB" id="228282">
    <molecule id="Q94C11-1"/>
</dbReference>
<dbReference type="EnsemblPlants" id="AT3G52120.1">
    <molecule id="Q94C11-1"/>
    <property type="protein sequence ID" value="AT3G52120.1"/>
    <property type="gene ID" value="AT3G52120"/>
</dbReference>
<dbReference type="GeneID" id="824376"/>
<dbReference type="Gramene" id="AT3G52120.1">
    <molecule id="Q94C11-1"/>
    <property type="protein sequence ID" value="AT3G52120.1"/>
    <property type="gene ID" value="AT3G52120"/>
</dbReference>
<dbReference type="KEGG" id="ath:AT3G52120"/>
<dbReference type="Araport" id="AT3G52120"/>
<dbReference type="TAIR" id="AT3G52120"/>
<dbReference type="eggNOG" id="KOG0965">
    <property type="taxonomic scope" value="Eukaryota"/>
</dbReference>
<dbReference type="HOGENOM" id="CLU_624709_0_0_1"/>
<dbReference type="InParanoid" id="Q94C11"/>
<dbReference type="PhylomeDB" id="Q94C11"/>
<dbReference type="PRO" id="PR:Q94C11"/>
<dbReference type="Proteomes" id="UP000006548">
    <property type="component" value="Chromosome 3"/>
</dbReference>
<dbReference type="ExpressionAtlas" id="Q94C11">
    <property type="expression patterns" value="baseline and differential"/>
</dbReference>
<dbReference type="GO" id="GO:0005634">
    <property type="term" value="C:nucleus"/>
    <property type="evidence" value="ECO:0007669"/>
    <property type="project" value="UniProtKB-SubCell"/>
</dbReference>
<dbReference type="GO" id="GO:0003723">
    <property type="term" value="F:RNA binding"/>
    <property type="evidence" value="ECO:0007669"/>
    <property type="project" value="InterPro"/>
</dbReference>
<dbReference type="GO" id="GO:0006397">
    <property type="term" value="P:mRNA processing"/>
    <property type="evidence" value="ECO:0007669"/>
    <property type="project" value="UniProtKB-KW"/>
</dbReference>
<dbReference type="GO" id="GO:0008380">
    <property type="term" value="P:RNA splicing"/>
    <property type="evidence" value="ECO:0007669"/>
    <property type="project" value="UniProtKB-KW"/>
</dbReference>
<dbReference type="Gene3D" id="1.10.10.790">
    <property type="entry name" value="Surp module"/>
    <property type="match status" value="1"/>
</dbReference>
<dbReference type="InterPro" id="IPR000467">
    <property type="entry name" value="G_patch_dom"/>
</dbReference>
<dbReference type="InterPro" id="IPR040169">
    <property type="entry name" value="SUGP1/2"/>
</dbReference>
<dbReference type="InterPro" id="IPR000061">
    <property type="entry name" value="Surp"/>
</dbReference>
<dbReference type="InterPro" id="IPR035967">
    <property type="entry name" value="SWAP/Surp_sf"/>
</dbReference>
<dbReference type="PANTHER" id="PTHR23340">
    <property type="entry name" value="ARGININE/SERINE RICH SPLICING FACTOR SF4/14"/>
    <property type="match status" value="1"/>
</dbReference>
<dbReference type="PANTHER" id="PTHR23340:SF0">
    <property type="entry name" value="SURP AND G-PATCH DOMAIN-CONTAINING PROTEIN 1 ISOFORM X1"/>
    <property type="match status" value="1"/>
</dbReference>
<dbReference type="Pfam" id="PF01585">
    <property type="entry name" value="G-patch"/>
    <property type="match status" value="1"/>
</dbReference>
<dbReference type="Pfam" id="PF01805">
    <property type="entry name" value="Surp"/>
    <property type="match status" value="1"/>
</dbReference>
<dbReference type="SMART" id="SM00443">
    <property type="entry name" value="G_patch"/>
    <property type="match status" value="1"/>
</dbReference>
<dbReference type="SMART" id="SM00648">
    <property type="entry name" value="SWAP"/>
    <property type="match status" value="1"/>
</dbReference>
<dbReference type="SUPFAM" id="SSF109905">
    <property type="entry name" value="Surp module (SWAP domain)"/>
    <property type="match status" value="1"/>
</dbReference>
<dbReference type="PROSITE" id="PS50174">
    <property type="entry name" value="G_PATCH"/>
    <property type="match status" value="1"/>
</dbReference>
<dbReference type="PROSITE" id="PS50128">
    <property type="entry name" value="SURP"/>
    <property type="match status" value="1"/>
</dbReference>